<name>DYRA_STAAU</name>
<comment type="function">
    <text>Key enzyme in folate metabolism. Catalyzes an essential reaction for de novo glycine and purine synthesis, and for DNA precursor synthesis.</text>
</comment>
<comment type="catalytic activity">
    <reaction evidence="2">
        <text>(6S)-5,6,7,8-tetrahydrofolate + NADP(+) = 7,8-dihydrofolate + NADPH + H(+)</text>
        <dbReference type="Rhea" id="RHEA:15009"/>
        <dbReference type="ChEBI" id="CHEBI:15378"/>
        <dbReference type="ChEBI" id="CHEBI:57451"/>
        <dbReference type="ChEBI" id="CHEBI:57453"/>
        <dbReference type="ChEBI" id="CHEBI:57783"/>
        <dbReference type="ChEBI" id="CHEBI:58349"/>
        <dbReference type="EC" id="1.5.1.3"/>
    </reaction>
</comment>
<comment type="pathway">
    <text>Cofactor biosynthesis; tetrahydrofolate biosynthesis; 5,6,7,8-tetrahydrofolate from 7,8-dihydrofolate: step 1/1.</text>
</comment>
<comment type="miscellaneous">
    <text>There are two DhfR isozymes in S.aureus, this one is plasmid-encoded and is resistant to trimethoprim.</text>
</comment>
<comment type="similarity">
    <text evidence="4">Belongs to the dihydrofolate reductase family.</text>
</comment>
<feature type="initiator methionine" description="Removed" evidence="1">
    <location>
        <position position="1"/>
    </location>
</feature>
<feature type="chain" id="PRO_0000186405" description="Dihydrofolate reductase type 1 from Tn4003">
    <location>
        <begin position="2"/>
        <end position="161"/>
    </location>
</feature>
<feature type="domain" description="DHFR" evidence="2">
    <location>
        <begin position="2"/>
        <end position="157"/>
    </location>
</feature>
<feature type="binding site" evidence="5">
    <location>
        <begin position="6"/>
        <end position="8"/>
    </location>
    <ligand>
        <name>substrate</name>
    </ligand>
</feature>
<feature type="binding site" evidence="3">
    <location>
        <begin position="7"/>
        <end position="8"/>
    </location>
    <ligand>
        <name>NADP(+)</name>
        <dbReference type="ChEBI" id="CHEBI:58349"/>
    </ligand>
</feature>
<feature type="binding site" evidence="3">
    <location>
        <begin position="15"/>
        <end position="20"/>
    </location>
    <ligand>
        <name>NADP(+)</name>
        <dbReference type="ChEBI" id="CHEBI:58349"/>
    </ligand>
</feature>
<feature type="binding site" evidence="5">
    <location>
        <position position="28"/>
    </location>
    <ligand>
        <name>substrate</name>
    </ligand>
</feature>
<feature type="binding site" evidence="3">
    <location>
        <begin position="44"/>
        <end position="47"/>
    </location>
    <ligand>
        <name>NADP(+)</name>
        <dbReference type="ChEBI" id="CHEBI:58349"/>
    </ligand>
</feature>
<feature type="binding site" evidence="5">
    <location>
        <position position="58"/>
    </location>
    <ligand>
        <name>substrate</name>
    </ligand>
</feature>
<feature type="binding site" evidence="3">
    <location>
        <begin position="63"/>
        <end position="66"/>
    </location>
    <ligand>
        <name>NADP(+)</name>
        <dbReference type="ChEBI" id="CHEBI:58349"/>
    </ligand>
</feature>
<feature type="binding site" evidence="3">
    <location>
        <begin position="93"/>
        <end position="98"/>
    </location>
    <ligand>
        <name>NADP(+)</name>
        <dbReference type="ChEBI" id="CHEBI:58349"/>
    </ligand>
</feature>
<feature type="binding site" evidence="5">
    <location>
        <position position="112"/>
    </location>
    <ligand>
        <name>substrate</name>
    </ligand>
</feature>
<feature type="mutagenesis site" description="Increases trimethoprim sensitivity; when associated with F-99." evidence="3">
    <original>A</original>
    <variation>G</variation>
    <location>
        <position position="44"/>
    </location>
</feature>
<feature type="mutagenesis site" description="Increases trimethoprim sensitivity; when associated with G-44." evidence="3">
    <original>Y</original>
    <variation>F</variation>
    <location>
        <position position="99"/>
    </location>
</feature>
<feature type="strand" evidence="6">
    <location>
        <begin position="3"/>
        <end position="10"/>
    </location>
</feature>
<feature type="strand" evidence="6">
    <location>
        <begin position="14"/>
        <end position="17"/>
    </location>
</feature>
<feature type="helix" evidence="6">
    <location>
        <begin position="26"/>
        <end position="36"/>
    </location>
</feature>
<feature type="strand" evidence="6">
    <location>
        <begin position="39"/>
        <end position="44"/>
    </location>
</feature>
<feature type="helix" evidence="6">
    <location>
        <begin position="45"/>
        <end position="51"/>
    </location>
</feature>
<feature type="strand" evidence="6">
    <location>
        <begin position="58"/>
        <end position="63"/>
    </location>
</feature>
<feature type="strand" evidence="6">
    <location>
        <begin position="75"/>
        <end position="77"/>
    </location>
</feature>
<feature type="helix" evidence="6">
    <location>
        <begin position="81"/>
        <end position="84"/>
    </location>
</feature>
<feature type="strand" evidence="6">
    <location>
        <begin position="90"/>
        <end position="94"/>
    </location>
</feature>
<feature type="helix" evidence="6">
    <location>
        <begin position="96"/>
        <end position="102"/>
    </location>
</feature>
<feature type="turn" evidence="6">
    <location>
        <begin position="103"/>
        <end position="105"/>
    </location>
</feature>
<feature type="strand" evidence="6">
    <location>
        <begin position="107"/>
        <end position="116"/>
    </location>
</feature>
<feature type="strand" evidence="6">
    <location>
        <begin position="120"/>
        <end position="123"/>
    </location>
</feature>
<feature type="turn" evidence="6">
    <location>
        <begin position="129"/>
        <end position="131"/>
    </location>
</feature>
<feature type="strand" evidence="6">
    <location>
        <begin position="132"/>
        <end position="139"/>
    </location>
</feature>
<feature type="strand" evidence="7">
    <location>
        <begin position="143"/>
        <end position="145"/>
    </location>
</feature>
<feature type="strand" evidence="6">
    <location>
        <begin position="150"/>
        <end position="157"/>
    </location>
</feature>
<sequence length="161" mass="18461">MTLSIIVAHDKQRVIGYQNQLPWHLPNDLKHIKQLTTGNTLVMARKTFNSIGKPLPNRRNVVLTNQASFHHEGVDVINSLDEIKELSGHVFIFGGQTLYEAMIDQVDDMYITVIDGKFQGDTFFPPYTFENWEVESSVEGQLDEKNTIPHTFLHLVRRKGK</sequence>
<gene>
    <name type="primary">dfrA</name>
</gene>
<dbReference type="EC" id="1.5.1.3"/>
<dbReference type="EMBL" id="X13290">
    <property type="protein sequence ID" value="CAA31649.1"/>
    <property type="molecule type" value="Genomic_DNA"/>
</dbReference>
<dbReference type="EMBL" id="Y07536">
    <property type="protein sequence ID" value="CAA68824.1"/>
    <property type="molecule type" value="Genomic_DNA"/>
</dbReference>
<dbReference type="PIR" id="S04164">
    <property type="entry name" value="S04164"/>
</dbReference>
<dbReference type="RefSeq" id="NP_877983.1">
    <property type="nucleotide sequence ID" value="NC_005054.1"/>
</dbReference>
<dbReference type="RefSeq" id="YP_002790943.1">
    <property type="nucleotide sequence ID" value="NC_012547.1"/>
</dbReference>
<dbReference type="RefSeq" id="YP_003813115.1">
    <property type="nucleotide sequence ID" value="NC_014369.1"/>
</dbReference>
<dbReference type="RefSeq" id="YP_006937652.1">
    <property type="nucleotide sequence ID" value="NC_013320.1"/>
</dbReference>
<dbReference type="RefSeq" id="YP_006937707.1">
    <property type="nucleotide sequence ID" value="NC_013321.1"/>
</dbReference>
<dbReference type="RefSeq" id="YP_006938354.1">
    <property type="nucleotide sequence ID" value="NC_013338.1"/>
</dbReference>
<dbReference type="RefSeq" id="YP_006938562.1">
    <property type="nucleotide sequence ID" value="NC_013343.1"/>
</dbReference>
<dbReference type="PDB" id="2W9S">
    <property type="method" value="X-ray"/>
    <property type="resolution" value="1.80 A"/>
    <property type="chains" value="A/B/C/D/E/F=1-161"/>
</dbReference>
<dbReference type="PDB" id="2W9T">
    <property type="method" value="X-ray"/>
    <property type="resolution" value="2.35 A"/>
    <property type="chains" value="A/B=1-161"/>
</dbReference>
<dbReference type="PDBsum" id="2W9S"/>
<dbReference type="PDBsum" id="2W9T"/>
<dbReference type="SMR" id="P13955"/>
<dbReference type="BindingDB" id="P13955"/>
<dbReference type="OMA" id="LYMTKIH"/>
<dbReference type="BRENDA" id="1.5.1.3">
    <property type="organism ID" value="3352"/>
</dbReference>
<dbReference type="UniPathway" id="UPA00077">
    <property type="reaction ID" value="UER00158"/>
</dbReference>
<dbReference type="EvolutionaryTrace" id="P13955"/>
<dbReference type="GO" id="GO:0005829">
    <property type="term" value="C:cytosol"/>
    <property type="evidence" value="ECO:0007669"/>
    <property type="project" value="TreeGrafter"/>
</dbReference>
<dbReference type="GO" id="GO:0004146">
    <property type="term" value="F:dihydrofolate reductase activity"/>
    <property type="evidence" value="ECO:0007669"/>
    <property type="project" value="UniProtKB-EC"/>
</dbReference>
<dbReference type="GO" id="GO:0050661">
    <property type="term" value="F:NADP binding"/>
    <property type="evidence" value="ECO:0007669"/>
    <property type="project" value="InterPro"/>
</dbReference>
<dbReference type="GO" id="GO:0046452">
    <property type="term" value="P:dihydrofolate metabolic process"/>
    <property type="evidence" value="ECO:0007669"/>
    <property type="project" value="TreeGrafter"/>
</dbReference>
<dbReference type="GO" id="GO:0046655">
    <property type="term" value="P:folic acid metabolic process"/>
    <property type="evidence" value="ECO:0007669"/>
    <property type="project" value="TreeGrafter"/>
</dbReference>
<dbReference type="GO" id="GO:0006730">
    <property type="term" value="P:one-carbon metabolic process"/>
    <property type="evidence" value="ECO:0007669"/>
    <property type="project" value="UniProtKB-KW"/>
</dbReference>
<dbReference type="GO" id="GO:0046677">
    <property type="term" value="P:response to antibiotic"/>
    <property type="evidence" value="ECO:0007669"/>
    <property type="project" value="UniProtKB-KW"/>
</dbReference>
<dbReference type="GO" id="GO:0031427">
    <property type="term" value="P:response to methotrexate"/>
    <property type="evidence" value="ECO:0007669"/>
    <property type="project" value="UniProtKB-KW"/>
</dbReference>
<dbReference type="GO" id="GO:0046654">
    <property type="term" value="P:tetrahydrofolate biosynthetic process"/>
    <property type="evidence" value="ECO:0007669"/>
    <property type="project" value="UniProtKB-UniPathway"/>
</dbReference>
<dbReference type="CDD" id="cd00209">
    <property type="entry name" value="DHFR"/>
    <property type="match status" value="1"/>
</dbReference>
<dbReference type="FunFam" id="3.40.430.10:FF:000001">
    <property type="entry name" value="Dihydrofolate reductase"/>
    <property type="match status" value="1"/>
</dbReference>
<dbReference type="Gene3D" id="3.40.430.10">
    <property type="entry name" value="Dihydrofolate Reductase, subunit A"/>
    <property type="match status" value="1"/>
</dbReference>
<dbReference type="InterPro" id="IPR012259">
    <property type="entry name" value="DHFR"/>
</dbReference>
<dbReference type="InterPro" id="IPR024072">
    <property type="entry name" value="DHFR-like_dom_sf"/>
</dbReference>
<dbReference type="InterPro" id="IPR017925">
    <property type="entry name" value="DHFR_CS"/>
</dbReference>
<dbReference type="InterPro" id="IPR001796">
    <property type="entry name" value="DHFR_dom"/>
</dbReference>
<dbReference type="NCBIfam" id="NF000155">
    <property type="entry name" value="trim_DfrC"/>
    <property type="match status" value="1"/>
</dbReference>
<dbReference type="PANTHER" id="PTHR48069">
    <property type="entry name" value="DIHYDROFOLATE REDUCTASE"/>
    <property type="match status" value="1"/>
</dbReference>
<dbReference type="PANTHER" id="PTHR48069:SF3">
    <property type="entry name" value="DIHYDROFOLATE REDUCTASE"/>
    <property type="match status" value="1"/>
</dbReference>
<dbReference type="Pfam" id="PF00186">
    <property type="entry name" value="DHFR_1"/>
    <property type="match status" value="1"/>
</dbReference>
<dbReference type="PIRSF" id="PIRSF000194">
    <property type="entry name" value="DHFR"/>
    <property type="match status" value="1"/>
</dbReference>
<dbReference type="PRINTS" id="PR00070">
    <property type="entry name" value="DHFR"/>
</dbReference>
<dbReference type="SUPFAM" id="SSF53597">
    <property type="entry name" value="Dihydrofolate reductase-like"/>
    <property type="match status" value="1"/>
</dbReference>
<dbReference type="PROSITE" id="PS00075">
    <property type="entry name" value="DHFR_1"/>
    <property type="match status" value="1"/>
</dbReference>
<dbReference type="PROSITE" id="PS51330">
    <property type="entry name" value="DHFR_2"/>
    <property type="match status" value="1"/>
</dbReference>
<keyword id="KW-0002">3D-structure</keyword>
<keyword id="KW-0046">Antibiotic resistance</keyword>
<keyword id="KW-0487">Methotrexate resistance</keyword>
<keyword id="KW-0521">NADP</keyword>
<keyword id="KW-0554">One-carbon metabolism</keyword>
<keyword id="KW-0560">Oxidoreductase</keyword>
<keyword id="KW-0614">Plasmid</keyword>
<keyword id="KW-0817">Trimethoprim resistance</keyword>
<accession>P13955</accession>
<reference key="1">
    <citation type="journal article" date="1989" name="Mol. Microbiol.">
        <title>Trimethoprim resistance transposon Tn4003 from Staphylococcus aureus encodes genes for a dihydrofolate reductase and thymidylate synthetase flanked by three copies of IS257.</title>
        <authorList>
            <person name="Rouch D.A."/>
            <person name="Messeroti L.J."/>
            <person name="Loo L.S.L."/>
            <person name="Jackson C.A."/>
            <person name="Skurray R.A."/>
        </authorList>
    </citation>
    <scope>NUCLEOTIDE SEQUENCE [GENOMIC DNA]</scope>
    <source>
        <transposon>Tn4003</transposon>
    </source>
</reference>
<reference key="2">
    <citation type="journal article" date="1990" name="FEBS Lett.">
        <title>Identical genes for trimethoprim-resistant dihydrofolate reductase from Staphylococcus aureus in Australia and central Europe.</title>
        <authorList>
            <person name="Burdeska A."/>
            <person name="Ott M."/>
            <person name="Bannwarth W."/>
            <person name="Then R.L."/>
        </authorList>
    </citation>
    <scope>NUCLEOTIDE SEQUENCE [GENOMIC DNA]</scope>
    <source>
        <strain>157/4696</strain>
    </source>
</reference>
<reference key="3">
    <citation type="journal article" date="2009" name="Proteins">
        <title>Structural comparison of chromosomal and exogenous dihydrofolate reductase from Staphylococcus aureus in complex with the potent inhibitor trimethoprim.</title>
        <authorList>
            <person name="Heaslet H."/>
            <person name="Harris M."/>
            <person name="Fahnoe K."/>
            <person name="Sarver R."/>
            <person name="Putz H."/>
            <person name="Chang J."/>
            <person name="Subramanyam C."/>
            <person name="Barreiro G."/>
            <person name="Miller J.R."/>
        </authorList>
    </citation>
    <scope>X-RAY CRYSTALLOGRAPHY (1.8 ANGSTROMS) IN COMPLEX WITH NADPH AND TRIMETHOPRIM</scope>
    <scope>MUTAGENESIS OF ALA-44 AND TYR-99</scope>
</reference>
<proteinExistence type="evidence at protein level"/>
<geneLocation type="plasmid">
    <name>pSK1</name>
</geneLocation>
<organism>
    <name type="scientific">Staphylococcus aureus</name>
    <dbReference type="NCBI Taxonomy" id="1280"/>
    <lineage>
        <taxon>Bacteria</taxon>
        <taxon>Bacillati</taxon>
        <taxon>Bacillota</taxon>
        <taxon>Bacilli</taxon>
        <taxon>Bacillales</taxon>
        <taxon>Staphylococcaceae</taxon>
        <taxon>Staphylococcus</taxon>
    </lineage>
</organism>
<evidence type="ECO:0000250" key="1"/>
<evidence type="ECO:0000255" key="2">
    <source>
        <dbReference type="PROSITE-ProRule" id="PRU00660"/>
    </source>
</evidence>
<evidence type="ECO:0000269" key="3">
    <source>
    </source>
</evidence>
<evidence type="ECO:0000305" key="4"/>
<evidence type="ECO:0000305" key="5">
    <source>
    </source>
</evidence>
<evidence type="ECO:0007829" key="6">
    <source>
        <dbReference type="PDB" id="2W9S"/>
    </source>
</evidence>
<evidence type="ECO:0007829" key="7">
    <source>
        <dbReference type="PDB" id="2W9T"/>
    </source>
</evidence>
<protein>
    <recommendedName>
        <fullName>Dihydrofolate reductase type 1 from Tn4003</fullName>
        <ecNumber>1.5.1.3</ecNumber>
    </recommendedName>
</protein>